<accession>P55539</accession>
<geneLocation type="plasmid">
    <name>sym pNGR234a</name>
</geneLocation>
<organism>
    <name type="scientific">Sinorhizobium fredii (strain NBRC 101917 / NGR234)</name>
    <dbReference type="NCBI Taxonomy" id="394"/>
    <lineage>
        <taxon>Bacteria</taxon>
        <taxon>Pseudomonadati</taxon>
        <taxon>Pseudomonadota</taxon>
        <taxon>Alphaproteobacteria</taxon>
        <taxon>Hyphomicrobiales</taxon>
        <taxon>Rhizobiaceae</taxon>
        <taxon>Sinorhizobium/Ensifer group</taxon>
        <taxon>Sinorhizobium</taxon>
    </lineage>
</organism>
<protein>
    <recommendedName>
        <fullName>Probable farnesyl diphosphate synthase</fullName>
        <shortName>FPP synthase</shortName>
        <ecNumber>2.5.1.10</ecNumber>
    </recommendedName>
    <alternativeName>
        <fullName>(2E,6E)-farnesyl diphosphate synthase</fullName>
    </alternativeName>
    <alternativeName>
        <fullName>Geranyltranstransferase</fullName>
    </alternativeName>
</protein>
<dbReference type="EC" id="2.5.1.10"/>
<dbReference type="EMBL" id="U00090">
    <property type="protein sequence ID" value="AAB91752.1"/>
    <property type="molecule type" value="Genomic_DNA"/>
</dbReference>
<dbReference type="PIR" id="T10875">
    <property type="entry name" value="T10875"/>
</dbReference>
<dbReference type="RefSeq" id="NP_443950.1">
    <property type="nucleotide sequence ID" value="NC_000914.2"/>
</dbReference>
<dbReference type="RefSeq" id="WP_010875300.1">
    <property type="nucleotide sequence ID" value="NC_000914.2"/>
</dbReference>
<dbReference type="SMR" id="P55539"/>
<dbReference type="KEGG" id="rhi:NGR_a02750"/>
<dbReference type="PATRIC" id="fig|394.7.peg.293"/>
<dbReference type="eggNOG" id="COG0142">
    <property type="taxonomic scope" value="Bacteria"/>
</dbReference>
<dbReference type="HOGENOM" id="CLU_014015_0_0_5"/>
<dbReference type="OrthoDB" id="9805316at2"/>
<dbReference type="Proteomes" id="UP000001054">
    <property type="component" value="Plasmid pNGR234a"/>
</dbReference>
<dbReference type="GO" id="GO:0005737">
    <property type="term" value="C:cytoplasm"/>
    <property type="evidence" value="ECO:0007669"/>
    <property type="project" value="UniProtKB-SubCell"/>
</dbReference>
<dbReference type="GO" id="GO:0004337">
    <property type="term" value="F:(2E,6E)-farnesyl diphosphate synthase activity"/>
    <property type="evidence" value="ECO:0007669"/>
    <property type="project" value="UniProtKB-EC"/>
</dbReference>
<dbReference type="GO" id="GO:0046872">
    <property type="term" value="F:metal ion binding"/>
    <property type="evidence" value="ECO:0007669"/>
    <property type="project" value="UniProtKB-KW"/>
</dbReference>
<dbReference type="GO" id="GO:0008299">
    <property type="term" value="P:isoprenoid biosynthetic process"/>
    <property type="evidence" value="ECO:0007669"/>
    <property type="project" value="UniProtKB-KW"/>
</dbReference>
<dbReference type="CDD" id="cd00685">
    <property type="entry name" value="Trans_IPPS_HT"/>
    <property type="match status" value="1"/>
</dbReference>
<dbReference type="FunFam" id="1.10.600.10:FF:000001">
    <property type="entry name" value="Geranylgeranyl diphosphate synthase"/>
    <property type="match status" value="1"/>
</dbReference>
<dbReference type="Gene3D" id="1.10.600.10">
    <property type="entry name" value="Farnesyl Diphosphate Synthase"/>
    <property type="match status" value="1"/>
</dbReference>
<dbReference type="InterPro" id="IPR008949">
    <property type="entry name" value="Isoprenoid_synthase_dom_sf"/>
</dbReference>
<dbReference type="InterPro" id="IPR000092">
    <property type="entry name" value="Polyprenyl_synt"/>
</dbReference>
<dbReference type="InterPro" id="IPR033749">
    <property type="entry name" value="Polyprenyl_synt_CS"/>
</dbReference>
<dbReference type="PANTHER" id="PTHR43281">
    <property type="entry name" value="FARNESYL DIPHOSPHATE SYNTHASE"/>
    <property type="match status" value="1"/>
</dbReference>
<dbReference type="PANTHER" id="PTHR43281:SF1">
    <property type="entry name" value="FARNESYL DIPHOSPHATE SYNTHASE"/>
    <property type="match status" value="1"/>
</dbReference>
<dbReference type="Pfam" id="PF00348">
    <property type="entry name" value="polyprenyl_synt"/>
    <property type="match status" value="1"/>
</dbReference>
<dbReference type="SFLD" id="SFLDS00005">
    <property type="entry name" value="Isoprenoid_Synthase_Type_I"/>
    <property type="match status" value="1"/>
</dbReference>
<dbReference type="SFLD" id="SFLDG01017">
    <property type="entry name" value="Polyprenyl_Transferase_Like"/>
    <property type="match status" value="1"/>
</dbReference>
<dbReference type="SUPFAM" id="SSF48576">
    <property type="entry name" value="Terpenoid synthases"/>
    <property type="match status" value="1"/>
</dbReference>
<dbReference type="PROSITE" id="PS00723">
    <property type="entry name" value="POLYPRENYL_SYNTHASE_1"/>
    <property type="match status" value="1"/>
</dbReference>
<dbReference type="PROSITE" id="PS00444">
    <property type="entry name" value="POLYPRENYL_SYNTHASE_2"/>
    <property type="match status" value="1"/>
</dbReference>
<name>ISPA_SINFN</name>
<proteinExistence type="inferred from homology"/>
<evidence type="ECO:0000250" key="1"/>
<evidence type="ECO:0000250" key="2">
    <source>
        <dbReference type="UniProtKB" id="P14324"/>
    </source>
</evidence>
<evidence type="ECO:0000250" key="3">
    <source>
        <dbReference type="UniProtKB" id="Q12051"/>
    </source>
</evidence>
<evidence type="ECO:0000305" key="4"/>
<keyword id="KW-0963">Cytoplasm</keyword>
<keyword id="KW-0414">Isoprene biosynthesis</keyword>
<keyword id="KW-0460">Magnesium</keyword>
<keyword id="KW-0479">Metal-binding</keyword>
<keyword id="KW-0614">Plasmid</keyword>
<keyword id="KW-1185">Reference proteome</keyword>
<keyword id="KW-0808">Transferase</keyword>
<reference key="1">
    <citation type="journal article" date="1997" name="Nature">
        <title>Molecular basis of symbiosis between Rhizobium and legumes.</title>
        <authorList>
            <person name="Freiberg C.A."/>
            <person name="Fellay R."/>
            <person name="Bairoch A."/>
            <person name="Broughton W.J."/>
            <person name="Rosenthal A."/>
            <person name="Perret X."/>
        </authorList>
    </citation>
    <scope>NUCLEOTIDE SEQUENCE [LARGE SCALE GENOMIC DNA]</scope>
    <source>
        <strain>NBRC 101917 / NGR234</strain>
    </source>
</reference>
<reference key="2">
    <citation type="journal article" date="2009" name="Appl. Environ. Microbiol.">
        <title>Rhizobium sp. strain NGR234 possesses a remarkable number of secretion systems.</title>
        <authorList>
            <person name="Schmeisser C."/>
            <person name="Liesegang H."/>
            <person name="Krysciak D."/>
            <person name="Bakkou N."/>
            <person name="Le Quere A."/>
            <person name="Wollherr A."/>
            <person name="Heinemeyer I."/>
            <person name="Morgenstern B."/>
            <person name="Pommerening-Roeser A."/>
            <person name="Flores M."/>
            <person name="Palacios R."/>
            <person name="Brenner S."/>
            <person name="Gottschalk G."/>
            <person name="Schmitz R.A."/>
            <person name="Broughton W.J."/>
            <person name="Perret X."/>
            <person name="Strittmatter A.W."/>
            <person name="Streit W.R."/>
        </authorList>
    </citation>
    <scope>NUCLEOTIDE SEQUENCE [LARGE SCALE GENOMIC DNA]</scope>
    <source>
        <strain>NBRC 101917 / NGR234</strain>
    </source>
</reference>
<feature type="chain" id="PRO_0000123990" description="Probable farnesyl diphosphate synthase">
    <location>
        <begin position="1"/>
        <end position="332"/>
    </location>
</feature>
<feature type="binding site" evidence="2">
    <location>
        <position position="75"/>
    </location>
    <ligand>
        <name>isopentenyl diphosphate</name>
        <dbReference type="ChEBI" id="CHEBI:128769"/>
    </ligand>
</feature>
<feature type="binding site" evidence="2">
    <location>
        <position position="78"/>
    </location>
    <ligand>
        <name>isopentenyl diphosphate</name>
        <dbReference type="ChEBI" id="CHEBI:128769"/>
    </ligand>
</feature>
<feature type="binding site" evidence="3">
    <location>
        <position position="107"/>
    </location>
    <ligand>
        <name>isopentenyl diphosphate</name>
        <dbReference type="ChEBI" id="CHEBI:128769"/>
    </ligand>
</feature>
<feature type="binding site" evidence="2">
    <location>
        <position position="114"/>
    </location>
    <ligand>
        <name>Mg(2+)</name>
        <dbReference type="ChEBI" id="CHEBI:18420"/>
        <label>1</label>
    </ligand>
</feature>
<feature type="binding site" evidence="2">
    <location>
        <position position="114"/>
    </location>
    <ligand>
        <name>Mg(2+)</name>
        <dbReference type="ChEBI" id="CHEBI:18420"/>
        <label>2</label>
    </ligand>
</feature>
<feature type="binding site" evidence="2">
    <location>
        <position position="120"/>
    </location>
    <ligand>
        <name>Mg(2+)</name>
        <dbReference type="ChEBI" id="CHEBI:18420"/>
        <label>1</label>
    </ligand>
</feature>
<feature type="binding site" evidence="2">
    <location>
        <position position="120"/>
    </location>
    <ligand>
        <name>Mg(2+)</name>
        <dbReference type="ChEBI" id="CHEBI:18420"/>
        <label>2</label>
    </ligand>
</feature>
<feature type="binding site" evidence="1">
    <location>
        <position position="125"/>
    </location>
    <ligand>
        <name>(2E)-geranyl diphosphate</name>
        <dbReference type="ChEBI" id="CHEBI:58057"/>
    </ligand>
</feature>
<feature type="binding site" evidence="2">
    <location>
        <position position="126"/>
    </location>
    <ligand>
        <name>isopentenyl diphosphate</name>
        <dbReference type="ChEBI" id="CHEBI:128769"/>
    </ligand>
</feature>
<feature type="binding site" evidence="1">
    <location>
        <position position="208"/>
    </location>
    <ligand>
        <name>(2E)-geranyl diphosphate</name>
        <dbReference type="ChEBI" id="CHEBI:58057"/>
    </ligand>
</feature>
<feature type="binding site" evidence="1">
    <location>
        <position position="250"/>
    </location>
    <ligand>
        <name>(2E)-geranyl diphosphate</name>
        <dbReference type="ChEBI" id="CHEBI:58057"/>
    </ligand>
</feature>
<feature type="binding site" evidence="1">
    <location>
        <position position="267"/>
    </location>
    <ligand>
        <name>(2E)-geranyl diphosphate</name>
        <dbReference type="ChEBI" id="CHEBI:58057"/>
    </ligand>
</feature>
<sequence>MQTGSTLHDDRTSVSALGGLGARARGASGRLLPEIWMQNGAKRVEQALARLLCAEDHGETELMAAMRYATLHGGKRTRALLCLAAGALADTPAHILDDVGAAIEMMHACTLVHDDLPAMDDDVLRRGLPTVHVKFGEATAILVGDALQAHAFLTLASLDAPGDNRIALVRELAQAVSAEGAAGGQAMDLSLVGKHVELDRIVAMHRMKCGALVRASVRMGALCAIAEDAADATLYCALDHYSACFGLALQVVDDILDATADTATLGKTPGKDAAAQKPTCASIMGLQAARQFALDLLCEAGEAIAPLGPRAERLAQMLQRASAYLFKHAPSA</sequence>
<comment type="catalytic activity">
    <reaction>
        <text>isopentenyl diphosphate + (2E)-geranyl diphosphate = (2E,6E)-farnesyl diphosphate + diphosphate</text>
        <dbReference type="Rhea" id="RHEA:19361"/>
        <dbReference type="ChEBI" id="CHEBI:33019"/>
        <dbReference type="ChEBI" id="CHEBI:58057"/>
        <dbReference type="ChEBI" id="CHEBI:128769"/>
        <dbReference type="ChEBI" id="CHEBI:175763"/>
        <dbReference type="EC" id="2.5.1.10"/>
    </reaction>
</comment>
<comment type="cofactor">
    <cofactor evidence="1">
        <name>Mg(2+)</name>
        <dbReference type="ChEBI" id="CHEBI:18420"/>
    </cofactor>
    <text evidence="1">Binds 2 Mg(2+) ions per subunit.</text>
</comment>
<comment type="subcellular location">
    <subcellularLocation>
        <location evidence="4">Cytoplasm</location>
    </subcellularLocation>
</comment>
<comment type="similarity">
    <text evidence="4">Belongs to the FPP/GGPP synthase family.</text>
</comment>
<gene>
    <name type="ordered locus">NGR_a02750</name>
    <name type="ORF">y4kU</name>
</gene>